<protein>
    <recommendedName>
        <fullName evidence="1">Urease accessory protein UreG</fullName>
    </recommendedName>
</protein>
<dbReference type="EMBL" id="BA000030">
    <property type="protein sequence ID" value="BAC74819.1"/>
    <property type="molecule type" value="Genomic_DNA"/>
</dbReference>
<dbReference type="RefSeq" id="WP_010988503.1">
    <property type="nucleotide sequence ID" value="NZ_JZJK01000085.1"/>
</dbReference>
<dbReference type="SMR" id="Q826R7"/>
<dbReference type="GeneID" id="41544181"/>
<dbReference type="KEGG" id="sma:SAVERM_7108"/>
<dbReference type="eggNOG" id="COG0378">
    <property type="taxonomic scope" value="Bacteria"/>
</dbReference>
<dbReference type="HOGENOM" id="CLU_072144_1_0_11"/>
<dbReference type="OrthoDB" id="9802035at2"/>
<dbReference type="Proteomes" id="UP000000428">
    <property type="component" value="Chromosome"/>
</dbReference>
<dbReference type="GO" id="GO:0005737">
    <property type="term" value="C:cytoplasm"/>
    <property type="evidence" value="ECO:0007669"/>
    <property type="project" value="UniProtKB-SubCell"/>
</dbReference>
<dbReference type="GO" id="GO:0005525">
    <property type="term" value="F:GTP binding"/>
    <property type="evidence" value="ECO:0007669"/>
    <property type="project" value="UniProtKB-KW"/>
</dbReference>
<dbReference type="GO" id="GO:0003924">
    <property type="term" value="F:GTPase activity"/>
    <property type="evidence" value="ECO:0007669"/>
    <property type="project" value="InterPro"/>
</dbReference>
<dbReference type="GO" id="GO:0016151">
    <property type="term" value="F:nickel cation binding"/>
    <property type="evidence" value="ECO:0007669"/>
    <property type="project" value="UniProtKB-UniRule"/>
</dbReference>
<dbReference type="GO" id="GO:0043419">
    <property type="term" value="P:urea catabolic process"/>
    <property type="evidence" value="ECO:0007669"/>
    <property type="project" value="InterPro"/>
</dbReference>
<dbReference type="CDD" id="cd05540">
    <property type="entry name" value="UreG"/>
    <property type="match status" value="1"/>
</dbReference>
<dbReference type="Gene3D" id="3.40.50.300">
    <property type="entry name" value="P-loop containing nucleotide triphosphate hydrolases"/>
    <property type="match status" value="1"/>
</dbReference>
<dbReference type="HAMAP" id="MF_01389">
    <property type="entry name" value="UreG"/>
    <property type="match status" value="1"/>
</dbReference>
<dbReference type="InterPro" id="IPR003495">
    <property type="entry name" value="CobW/HypB/UreG_nucleotide-bd"/>
</dbReference>
<dbReference type="InterPro" id="IPR027417">
    <property type="entry name" value="P-loop_NTPase"/>
</dbReference>
<dbReference type="InterPro" id="IPR004400">
    <property type="entry name" value="UreG"/>
</dbReference>
<dbReference type="NCBIfam" id="TIGR00101">
    <property type="entry name" value="ureG"/>
    <property type="match status" value="1"/>
</dbReference>
<dbReference type="PANTHER" id="PTHR31715">
    <property type="entry name" value="UREASE ACCESSORY PROTEIN G"/>
    <property type="match status" value="1"/>
</dbReference>
<dbReference type="PANTHER" id="PTHR31715:SF0">
    <property type="entry name" value="UREASE ACCESSORY PROTEIN G"/>
    <property type="match status" value="1"/>
</dbReference>
<dbReference type="Pfam" id="PF02492">
    <property type="entry name" value="cobW"/>
    <property type="match status" value="1"/>
</dbReference>
<dbReference type="PIRSF" id="PIRSF005624">
    <property type="entry name" value="Ni-bind_GTPase"/>
    <property type="match status" value="1"/>
</dbReference>
<dbReference type="SUPFAM" id="SSF52540">
    <property type="entry name" value="P-loop containing nucleoside triphosphate hydrolases"/>
    <property type="match status" value="1"/>
</dbReference>
<reference key="1">
    <citation type="journal article" date="2001" name="Proc. Natl. Acad. Sci. U.S.A.">
        <title>Genome sequence of an industrial microorganism Streptomyces avermitilis: deducing the ability of producing secondary metabolites.</title>
        <authorList>
            <person name="Omura S."/>
            <person name="Ikeda H."/>
            <person name="Ishikawa J."/>
            <person name="Hanamoto A."/>
            <person name="Takahashi C."/>
            <person name="Shinose M."/>
            <person name="Takahashi Y."/>
            <person name="Horikawa H."/>
            <person name="Nakazawa H."/>
            <person name="Osonoe T."/>
            <person name="Kikuchi H."/>
            <person name="Shiba T."/>
            <person name="Sakaki Y."/>
            <person name="Hattori M."/>
        </authorList>
    </citation>
    <scope>NUCLEOTIDE SEQUENCE [LARGE SCALE GENOMIC DNA]</scope>
    <source>
        <strain>ATCC 31267 / DSM 46492 / JCM 5070 / NBRC 14893 / NCIMB 12804 / NRRL 8165 / MA-4680</strain>
    </source>
</reference>
<reference key="2">
    <citation type="journal article" date="2003" name="Nat. Biotechnol.">
        <title>Complete genome sequence and comparative analysis of the industrial microorganism Streptomyces avermitilis.</title>
        <authorList>
            <person name="Ikeda H."/>
            <person name="Ishikawa J."/>
            <person name="Hanamoto A."/>
            <person name="Shinose M."/>
            <person name="Kikuchi H."/>
            <person name="Shiba T."/>
            <person name="Sakaki Y."/>
            <person name="Hattori M."/>
            <person name="Omura S."/>
        </authorList>
    </citation>
    <scope>NUCLEOTIDE SEQUENCE [LARGE SCALE GENOMIC DNA]</scope>
    <source>
        <strain>ATCC 31267 / DSM 46492 / JCM 5070 / NBRC 14893 / NCIMB 12804 / NRRL 8165 / MA-4680</strain>
    </source>
</reference>
<name>UREG_STRAW</name>
<comment type="function">
    <text evidence="1">Facilitates the functional incorporation of the urease nickel metallocenter. This process requires GTP hydrolysis, probably effectuated by UreG.</text>
</comment>
<comment type="subunit">
    <text evidence="1">Homodimer. UreD, UreF and UreG form a complex that acts as a GTP-hydrolysis-dependent molecular chaperone, activating the urease apoprotein by helping to assemble the nickel containing metallocenter of UreC. The UreE protein probably delivers the nickel.</text>
</comment>
<comment type="subcellular location">
    <subcellularLocation>
        <location evidence="1">Cytoplasm</location>
    </subcellularLocation>
</comment>
<comment type="similarity">
    <text evidence="1">Belongs to the SIMIBI class G3E GTPase family. UreG subfamily.</text>
</comment>
<sequence length="227" mass="23786">MHLDHAHTHDGPSAVSADAHRPDGTRRALRIGLGGPVGSGKTATVAALCRALRDAFSLAVVTNDIYTREDAEFLLREAVLPPERITAVETGACPHTAIRDDISANLEAVEDLEDEVGPLDLVLVESGGDNLTATFSKGLVDAQIFVIDVAGGDDIPRKGGPGVTTADLLVVNKTDLAPYVGSDLGRMAADAKAQRAELPVVFQSLRTEPGVAPVADWVRARLAAWAA</sequence>
<keyword id="KW-0143">Chaperone</keyword>
<keyword id="KW-0963">Cytoplasm</keyword>
<keyword id="KW-0342">GTP-binding</keyword>
<keyword id="KW-0996">Nickel insertion</keyword>
<keyword id="KW-0547">Nucleotide-binding</keyword>
<keyword id="KW-1185">Reference proteome</keyword>
<proteinExistence type="inferred from homology"/>
<feature type="chain" id="PRO_0000347448" description="Urease accessory protein UreG">
    <location>
        <begin position="1"/>
        <end position="227"/>
    </location>
</feature>
<feature type="region of interest" description="Disordered" evidence="2">
    <location>
        <begin position="1"/>
        <end position="22"/>
    </location>
</feature>
<feature type="compositionally biased region" description="Basic and acidic residues" evidence="2">
    <location>
        <begin position="1"/>
        <end position="10"/>
    </location>
</feature>
<feature type="binding site" evidence="1">
    <location>
        <begin position="35"/>
        <end position="42"/>
    </location>
    <ligand>
        <name>GTP</name>
        <dbReference type="ChEBI" id="CHEBI:37565"/>
    </ligand>
</feature>
<evidence type="ECO:0000255" key="1">
    <source>
        <dbReference type="HAMAP-Rule" id="MF_01389"/>
    </source>
</evidence>
<evidence type="ECO:0000256" key="2">
    <source>
        <dbReference type="SAM" id="MobiDB-lite"/>
    </source>
</evidence>
<accession>Q826R7</accession>
<organism>
    <name type="scientific">Streptomyces avermitilis (strain ATCC 31267 / DSM 46492 / JCM 5070 / NBRC 14893 / NCIMB 12804 / NRRL 8165 / MA-4680)</name>
    <dbReference type="NCBI Taxonomy" id="227882"/>
    <lineage>
        <taxon>Bacteria</taxon>
        <taxon>Bacillati</taxon>
        <taxon>Actinomycetota</taxon>
        <taxon>Actinomycetes</taxon>
        <taxon>Kitasatosporales</taxon>
        <taxon>Streptomycetaceae</taxon>
        <taxon>Streptomyces</taxon>
    </lineage>
</organism>
<gene>
    <name evidence="1" type="primary">ureG</name>
    <name type="ordered locus">SAV_7108</name>
</gene>